<proteinExistence type="predicted"/>
<gene>
    <name type="ordered locus">RP612</name>
</gene>
<protein>
    <recommendedName>
        <fullName>Uncharacterized protein RP612</fullName>
    </recommendedName>
</protein>
<dbReference type="EMBL" id="AJ235272">
    <property type="protein sequence ID" value="CAA15056.1"/>
    <property type="molecule type" value="Genomic_DNA"/>
</dbReference>
<dbReference type="EMBL" id="Z49076">
    <property type="protein sequence ID" value="CAA88896.1"/>
    <property type="molecule type" value="Genomic_DNA"/>
</dbReference>
<dbReference type="PIR" id="F71666">
    <property type="entry name" value="F71666"/>
</dbReference>
<dbReference type="RefSeq" id="NP_220980.1">
    <property type="nucleotide sequence ID" value="NC_000963.1"/>
</dbReference>
<dbReference type="RefSeq" id="WP_010886335.1">
    <property type="nucleotide sequence ID" value="NC_000963.1"/>
</dbReference>
<dbReference type="SMR" id="P50938"/>
<dbReference type="STRING" id="272947.gene:17555691"/>
<dbReference type="EnsemblBacteria" id="CAA15056">
    <property type="protein sequence ID" value="CAA15056"/>
    <property type="gene ID" value="CAA15056"/>
</dbReference>
<dbReference type="KEGG" id="rpr:RP612"/>
<dbReference type="PATRIC" id="fig|272947.5.peg.631"/>
<dbReference type="HOGENOM" id="CLU_026288_0_0_5"/>
<dbReference type="OrthoDB" id="7161113at2"/>
<dbReference type="Proteomes" id="UP000002480">
    <property type="component" value="Chromosome"/>
</dbReference>
<dbReference type="InterPro" id="IPR052050">
    <property type="entry name" value="SecEffector_AnkRepeat"/>
</dbReference>
<dbReference type="PANTHER" id="PTHR46586">
    <property type="entry name" value="ANKYRIN REPEAT-CONTAINING PROTEIN"/>
    <property type="match status" value="1"/>
</dbReference>
<dbReference type="PANTHER" id="PTHR46586:SF3">
    <property type="entry name" value="ANKYRIN REPEAT-CONTAINING PROTEIN"/>
    <property type="match status" value="1"/>
</dbReference>
<accession>P50938</accession>
<evidence type="ECO:0000305" key="1"/>
<keyword id="KW-1185">Reference proteome</keyword>
<name>Y612_RICPR</name>
<organism>
    <name type="scientific">Rickettsia prowazekii (strain Madrid E)</name>
    <dbReference type="NCBI Taxonomy" id="272947"/>
    <lineage>
        <taxon>Bacteria</taxon>
        <taxon>Pseudomonadati</taxon>
        <taxon>Pseudomonadota</taxon>
        <taxon>Alphaproteobacteria</taxon>
        <taxon>Rickettsiales</taxon>
        <taxon>Rickettsiaceae</taxon>
        <taxon>Rickettsieae</taxon>
        <taxon>Rickettsia</taxon>
        <taxon>typhus group</taxon>
    </lineage>
</organism>
<reference key="1">
    <citation type="journal article" date="1998" name="Nature">
        <title>The genome sequence of Rickettsia prowazekii and the origin of mitochondria.</title>
        <authorList>
            <person name="Andersson S.G.E."/>
            <person name="Zomorodipour A."/>
            <person name="Andersson J.O."/>
            <person name="Sicheritz-Ponten T."/>
            <person name="Alsmark U.C.M."/>
            <person name="Podowski R.M."/>
            <person name="Naeslund A.K."/>
            <person name="Eriksson A.-S."/>
            <person name="Winkler H.H."/>
            <person name="Kurland C.G."/>
        </authorList>
    </citation>
    <scope>NUCLEOTIDE SEQUENCE [LARGE SCALE GENOMIC DNA]</scope>
    <source>
        <strain>Madrid E</strain>
    </source>
</reference>
<reference key="2">
    <citation type="journal article" date="1995" name="J. Bacteriol.">
        <title>Unusual organization of the rRNA genes in Rickettsia prowazekii.</title>
        <authorList>
            <person name="Andersson S.G.E."/>
            <person name="Zomorodipour A."/>
            <person name="Winkler H.H."/>
            <person name="Kurland C.G."/>
        </authorList>
    </citation>
    <scope>NUCLEOTIDE SEQUENCE [GENOMIC DNA] OF 1-161</scope>
    <source>
        <strain>Madrid E</strain>
    </source>
</reference>
<sequence length="568" mass="64087">MQKILIEGYDISKDNANPDIKEIRNLDHLPSAKACEYFIHAHGAEFFYQNSHLGLLGKIQSYFMPDPSYLSLTMSSNGGATPMLDITLLNKIQRNTPANQCNIVHIFSCCSGAAQHHLDFIEGNIVLCTYNKASDNNVTQLANSNYETRIKKHSSLIEYIHDNFHLLVASDFSISYKLDNEIYNFSLSSDNIKNMKSIEELPVFLYKEYGTFVKFYQNIYAKYHVSYPEIFNISIGTKPKGLTYADLVRVFTRALTLETYNFNKFSLSKIENLLHQKGLNTDFSVDQAIEQENFELLTSLLNYDNTNIQFYTINKTIDKGNLDILKAVVAHSTTKIESYNIDRAIDKGNLDILKAVVAHSTTKIESYNIDRAIDKGNLDILKAVVAHSTTKIESYNIDRAIDKGNLDILKAVVAHSTTKIESYNIDRAIDKGNLDILKAVVAHSTTKIESYNIDRAIDKGNLDILKAVVAHSTTKIESYNIDRAIDKGNLDILKAVVAHSTTKIESYNFNTVIKIGNLEMLDIILQHSYNSEELVTKYHNYTINNIMPEVNTIPTIEEDVSILGAEIV</sequence>
<feature type="chain" id="PRO_0000101405" description="Uncharacterized protein RP612">
    <location>
        <begin position="1"/>
        <end position="568"/>
    </location>
</feature>
<feature type="sequence conflict" description="In Ref. 2; CAA88896." evidence="1" ref="2">
    <original>H</original>
    <variation>R</variation>
    <location>
        <position position="117"/>
    </location>
</feature>
<feature type="sequence conflict" description="In Ref. 2; CAA88896." evidence="1" ref="2">
    <original>IEYIH</original>
    <variation>YRIYT</variation>
    <location>
        <begin position="157"/>
        <end position="161"/>
    </location>
</feature>